<name>Y2851_MYCTO</name>
<proteinExistence type="inferred from homology"/>
<accession>P9WFQ4</accession>
<accession>L0TDR4</accession>
<accession>O05808</accession>
<accession>P67104</accession>
<comment type="similarity">
    <text evidence="2">Belongs to the UPF0039 (ElaA) family.</text>
</comment>
<organism>
    <name type="scientific">Mycobacterium tuberculosis (strain CDC 1551 / Oshkosh)</name>
    <dbReference type="NCBI Taxonomy" id="83331"/>
    <lineage>
        <taxon>Bacteria</taxon>
        <taxon>Bacillati</taxon>
        <taxon>Actinomycetota</taxon>
        <taxon>Actinomycetes</taxon>
        <taxon>Mycobacteriales</taxon>
        <taxon>Mycobacteriaceae</taxon>
        <taxon>Mycobacterium</taxon>
        <taxon>Mycobacterium tuberculosis complex</taxon>
    </lineage>
</organism>
<dbReference type="EMBL" id="AE000516">
    <property type="protein sequence ID" value="AAK47243.1"/>
    <property type="molecule type" value="Genomic_DNA"/>
</dbReference>
<dbReference type="PIR" id="F70589">
    <property type="entry name" value="F70589"/>
</dbReference>
<dbReference type="RefSeq" id="WP_003414543.1">
    <property type="nucleotide sequence ID" value="NZ_KK341227.1"/>
</dbReference>
<dbReference type="SMR" id="P9WFQ4"/>
<dbReference type="KEGG" id="mtc:MT2917"/>
<dbReference type="PATRIC" id="fig|83331.31.peg.3151"/>
<dbReference type="HOGENOM" id="CLU_056607_3_1_11"/>
<dbReference type="Proteomes" id="UP000001020">
    <property type="component" value="Chromosome"/>
</dbReference>
<dbReference type="GO" id="GO:0016747">
    <property type="term" value="F:acyltransferase activity, transferring groups other than amino-acyl groups"/>
    <property type="evidence" value="ECO:0007669"/>
    <property type="project" value="InterPro"/>
</dbReference>
<dbReference type="Gene3D" id="3.40.630.30">
    <property type="match status" value="1"/>
</dbReference>
<dbReference type="InterPro" id="IPR016181">
    <property type="entry name" value="Acyl_CoA_acyltransferase"/>
</dbReference>
<dbReference type="InterPro" id="IPR000182">
    <property type="entry name" value="GNAT_dom"/>
</dbReference>
<dbReference type="Pfam" id="PF13673">
    <property type="entry name" value="Acetyltransf_10"/>
    <property type="match status" value="1"/>
</dbReference>
<dbReference type="SUPFAM" id="SSF55729">
    <property type="entry name" value="Acyl-CoA N-acyltransferases (Nat)"/>
    <property type="match status" value="1"/>
</dbReference>
<dbReference type="PROSITE" id="PS51186">
    <property type="entry name" value="GNAT"/>
    <property type="match status" value="1"/>
</dbReference>
<feature type="chain" id="PRO_0000428496" description="UPF0039 protein MT2917">
    <location>
        <begin position="1"/>
        <end position="156"/>
    </location>
</feature>
<feature type="domain" description="N-acetyltransferase" evidence="1">
    <location>
        <begin position="8"/>
        <end position="150"/>
    </location>
</feature>
<gene>
    <name type="ordered locus">MT2917</name>
</gene>
<evidence type="ECO:0000255" key="1">
    <source>
        <dbReference type="PROSITE-ProRule" id="PRU00532"/>
    </source>
</evidence>
<evidence type="ECO:0000305" key="2"/>
<reference key="1">
    <citation type="journal article" date="2002" name="J. Bacteriol.">
        <title>Whole-genome comparison of Mycobacterium tuberculosis clinical and laboratory strains.</title>
        <authorList>
            <person name="Fleischmann R.D."/>
            <person name="Alland D."/>
            <person name="Eisen J.A."/>
            <person name="Carpenter L."/>
            <person name="White O."/>
            <person name="Peterson J.D."/>
            <person name="DeBoy R.T."/>
            <person name="Dodson R.J."/>
            <person name="Gwinn M.L."/>
            <person name="Haft D.H."/>
            <person name="Hickey E.K."/>
            <person name="Kolonay J.F."/>
            <person name="Nelson W.C."/>
            <person name="Umayam L.A."/>
            <person name="Ermolaeva M.D."/>
            <person name="Salzberg S.L."/>
            <person name="Delcher A."/>
            <person name="Utterback T.R."/>
            <person name="Weidman J.F."/>
            <person name="Khouri H.M."/>
            <person name="Gill J."/>
            <person name="Mikula A."/>
            <person name="Bishai W."/>
            <person name="Jacobs W.R. Jr."/>
            <person name="Venter J.C."/>
            <person name="Fraser C.M."/>
        </authorList>
    </citation>
    <scope>NUCLEOTIDE SEQUENCE [LARGE SCALE GENOMIC DNA]</scope>
    <source>
        <strain>CDC 1551 / Oshkosh</strain>
    </source>
</reference>
<keyword id="KW-1185">Reference proteome</keyword>
<sequence length="156" mass="17670">MTEALRRVWAKDLDARALYELLKLRVEVFVVEQACPYPELDGRDLLAETRHFWLETPDGEVTCTLRLMEEHAGGEKVFRIGRLCTKRDARGQGHSNRLLCAALAEVGDYPCRIDAQAYLTAMYAQHGFVRDGDEFLDDGIPHVPMLRPGSGQVERP</sequence>
<protein>
    <recommendedName>
        <fullName>UPF0039 protein MT2917</fullName>
    </recommendedName>
</protein>